<comment type="function">
    <text evidence="4">Inhibits ADP- (IC(50)=63 nM) and collagen-induced (IC(50)=53 nM) aggregation of human platelets. In vitro, inhibits adhesion of endothelial cells to vitronectin, type-I collagen and, to a lower degree, fibronectin and laminin.</text>
</comment>
<comment type="subunit">
    <text evidence="1">Monomer.</text>
</comment>
<comment type="subcellular location">
    <subcellularLocation>
        <location evidence="4">Secreted</location>
    </subcellularLocation>
</comment>
<comment type="tissue specificity">
    <text evidence="7">Expressed by the venom gland.</text>
</comment>
<comment type="mass spectrometry" mass="7342.0" method="MALDI" evidence="4"/>
<comment type="miscellaneous">
    <text evidence="7">The disintegrin belongs to the medium disintegrin subfamily.</text>
</comment>
<comment type="similarity">
    <text evidence="6">Belongs to the venom metalloproteinase (M12B) family. P-II subfamily. P-IIa sub-subfamily.</text>
</comment>
<keyword id="KW-1217">Cell adhesion impairing toxin</keyword>
<keyword id="KW-0903">Direct protein sequencing</keyword>
<keyword id="KW-1015">Disulfide bond</keyword>
<keyword id="KW-1199">Hemostasis impairing toxin</keyword>
<keyword id="KW-1201">Platelet aggregation inhibiting toxin</keyword>
<keyword id="KW-0964">Secreted</keyword>
<keyword id="KW-0800">Toxin</keyword>
<reference key="1">
    <citation type="journal article" date="2014" name="Biochimie">
        <title>Isolation and characterization of four medium-size disintegrins from the venoms of Central American viperid snakes of the genera Atropoides, Bothrops, Cerrophidion and Crotalus.</title>
        <authorList>
            <person name="Angulo Y."/>
            <person name="Castro A."/>
            <person name="Lomonte B."/>
            <person name="Rucavado A."/>
            <person name="Fernandez J."/>
            <person name="Calvete J.J."/>
            <person name="Gutierrez J.M."/>
        </authorList>
    </citation>
    <scope>PROTEIN SEQUENCE</scope>
    <scope>FUNCTION</scope>
    <scope>SUBCELLULAR LOCATION</scope>
    <scope>MASS SPECTROMETRY</scope>
    <scope>IDENTIFICATION BY MASS SPECTROMETRY</scope>
    <source>
        <tissue>Venom</tissue>
    </source>
</reference>
<accession>P0DW30</accession>
<name>VM2_METMX</name>
<sequence length="62" mass="6468">EAGEECDCGTPANPCCDAATCKLRPGAQCAEGLCCDQCRFGDWNDDTCTGQSADCPRNGLYG</sequence>
<feature type="chain" id="PRO_0000456228" description="Disintegrin atropoimin" evidence="4">
    <location>
        <begin position="1"/>
        <end position="62"/>
    </location>
</feature>
<feature type="domain" description="Disintegrin" evidence="3">
    <location>
        <begin position="1"/>
        <end position="62"/>
    </location>
</feature>
<feature type="short sequence motif" description="Cell attachment site" evidence="6">
    <location>
        <begin position="41" status="less than"/>
        <end position="42"/>
    </location>
</feature>
<feature type="disulfide bond" evidence="2">
    <location>
        <begin position="6"/>
        <end position="21"/>
    </location>
</feature>
<feature type="disulfide bond" evidence="2">
    <location>
        <begin position="8"/>
        <end position="16"/>
    </location>
</feature>
<feature type="disulfide bond" evidence="2">
    <location>
        <begin position="15"/>
        <end position="38"/>
    </location>
</feature>
<feature type="disulfide bond" evidence="2">
    <location>
        <begin position="29"/>
        <end position="35"/>
    </location>
</feature>
<feature type="disulfide bond" evidence="2">
    <location>
        <begin position="34"/>
        <end position="48"/>
    </location>
</feature>
<feature type="disulfide bond" evidence="2">
    <location>
        <begin position="55"/>
        <end status="unknown"/>
    </location>
</feature>
<feature type="non-consecutive residues" evidence="7">
    <location>
        <begin position="40"/>
        <end position="41"/>
    </location>
</feature>
<evidence type="ECO:0000250" key="1">
    <source>
        <dbReference type="UniProtKB" id="P17497"/>
    </source>
</evidence>
<evidence type="ECO:0000250" key="2">
    <source>
        <dbReference type="UniProtKB" id="P21859"/>
    </source>
</evidence>
<evidence type="ECO:0000255" key="3">
    <source>
        <dbReference type="PROSITE-ProRule" id="PRU00068"/>
    </source>
</evidence>
<evidence type="ECO:0000269" key="4">
    <source>
    </source>
</evidence>
<evidence type="ECO:0000303" key="5">
    <source>
    </source>
</evidence>
<evidence type="ECO:0000305" key="6"/>
<evidence type="ECO:0000305" key="7">
    <source>
    </source>
</evidence>
<protein>
    <recommendedName>
        <fullName evidence="5">Disintegrin atropoimin</fullName>
    </recommendedName>
</protein>
<dbReference type="SMR" id="P0DW30"/>
<dbReference type="GO" id="GO:0005576">
    <property type="term" value="C:extracellular region"/>
    <property type="evidence" value="ECO:0007669"/>
    <property type="project" value="UniProtKB-SubCell"/>
</dbReference>
<dbReference type="GO" id="GO:0090729">
    <property type="term" value="F:toxin activity"/>
    <property type="evidence" value="ECO:0007669"/>
    <property type="project" value="UniProtKB-KW"/>
</dbReference>
<dbReference type="Gene3D" id="4.10.70.10">
    <property type="entry name" value="Disintegrin domain"/>
    <property type="match status" value="1"/>
</dbReference>
<dbReference type="InterPro" id="IPR001762">
    <property type="entry name" value="Disintegrin_dom"/>
</dbReference>
<dbReference type="InterPro" id="IPR036436">
    <property type="entry name" value="Disintegrin_dom_sf"/>
</dbReference>
<dbReference type="PANTHER" id="PTHR11905">
    <property type="entry name" value="ADAM A DISINTEGRIN AND METALLOPROTEASE DOMAIN"/>
    <property type="match status" value="1"/>
</dbReference>
<dbReference type="PANTHER" id="PTHR11905:SF159">
    <property type="entry name" value="ADAM METALLOPROTEASE"/>
    <property type="match status" value="1"/>
</dbReference>
<dbReference type="Pfam" id="PF00200">
    <property type="entry name" value="Disintegrin"/>
    <property type="match status" value="1"/>
</dbReference>
<dbReference type="SMART" id="SM00050">
    <property type="entry name" value="DISIN"/>
    <property type="match status" value="1"/>
</dbReference>
<dbReference type="SUPFAM" id="SSF57552">
    <property type="entry name" value="Blood coagulation inhibitor (disintegrin)"/>
    <property type="match status" value="1"/>
</dbReference>
<dbReference type="PROSITE" id="PS50214">
    <property type="entry name" value="DISINTEGRIN_2"/>
    <property type="match status" value="1"/>
</dbReference>
<proteinExistence type="evidence at protein level"/>
<organism>
    <name type="scientific">Metlapilcoatlus mexicanus</name>
    <name type="common">Central American jumping pitviper</name>
    <name type="synonym">Atropoides mexicanus</name>
    <dbReference type="NCBI Taxonomy" id="2902644"/>
    <lineage>
        <taxon>Eukaryota</taxon>
        <taxon>Metazoa</taxon>
        <taxon>Chordata</taxon>
        <taxon>Craniata</taxon>
        <taxon>Vertebrata</taxon>
        <taxon>Euteleostomi</taxon>
        <taxon>Lepidosauria</taxon>
        <taxon>Squamata</taxon>
        <taxon>Bifurcata</taxon>
        <taxon>Unidentata</taxon>
        <taxon>Episquamata</taxon>
        <taxon>Toxicofera</taxon>
        <taxon>Serpentes</taxon>
        <taxon>Colubroidea</taxon>
        <taxon>Viperidae</taxon>
        <taxon>Crotalinae</taxon>
        <taxon>Metlapilcoatlus</taxon>
    </lineage>
</organism>